<protein>
    <recommendedName>
        <fullName>Putative protein MSS51 homolog, mitochondrial</fullName>
    </recommendedName>
    <alternativeName>
        <fullName>Zinc finger MYND domain-containing protein 17</fullName>
    </alternativeName>
</protein>
<comment type="caution">
    <text evidence="3">Although no clear MSS51 ortholog is encoded in mammalian genomes, the mammalian MSS51/ZMYND17 protein is significantly similar. Considered by a number of resources to be the ortholog of yeast MSS51.</text>
</comment>
<reference key="1">
    <citation type="journal article" date="2004" name="Nature">
        <title>Genome sequence of the Brown Norway rat yields insights into mammalian evolution.</title>
        <authorList>
            <person name="Gibbs R.A."/>
            <person name="Weinstock G.M."/>
            <person name="Metzker M.L."/>
            <person name="Muzny D.M."/>
            <person name="Sodergren E.J."/>
            <person name="Scherer S."/>
            <person name="Scott G."/>
            <person name="Steffen D."/>
            <person name="Worley K.C."/>
            <person name="Burch P.E."/>
            <person name="Okwuonu G."/>
            <person name="Hines S."/>
            <person name="Lewis L."/>
            <person name="Deramo C."/>
            <person name="Delgado O."/>
            <person name="Dugan-Rocha S."/>
            <person name="Miner G."/>
            <person name="Morgan M."/>
            <person name="Hawes A."/>
            <person name="Gill R."/>
            <person name="Holt R.A."/>
            <person name="Adams M.D."/>
            <person name="Amanatides P.G."/>
            <person name="Baden-Tillson H."/>
            <person name="Barnstead M."/>
            <person name="Chin S."/>
            <person name="Evans C.A."/>
            <person name="Ferriera S."/>
            <person name="Fosler C."/>
            <person name="Glodek A."/>
            <person name="Gu Z."/>
            <person name="Jennings D."/>
            <person name="Kraft C.L."/>
            <person name="Nguyen T."/>
            <person name="Pfannkoch C.M."/>
            <person name="Sitter C."/>
            <person name="Sutton G.G."/>
            <person name="Venter J.C."/>
            <person name="Woodage T."/>
            <person name="Smith D."/>
            <person name="Lee H.-M."/>
            <person name="Gustafson E."/>
            <person name="Cahill P."/>
            <person name="Kana A."/>
            <person name="Doucette-Stamm L."/>
            <person name="Weinstock K."/>
            <person name="Fechtel K."/>
            <person name="Weiss R.B."/>
            <person name="Dunn D.M."/>
            <person name="Green E.D."/>
            <person name="Blakesley R.W."/>
            <person name="Bouffard G.G."/>
            <person name="De Jong P.J."/>
            <person name="Osoegawa K."/>
            <person name="Zhu B."/>
            <person name="Marra M."/>
            <person name="Schein J."/>
            <person name="Bosdet I."/>
            <person name="Fjell C."/>
            <person name="Jones S."/>
            <person name="Krzywinski M."/>
            <person name="Mathewson C."/>
            <person name="Siddiqui A."/>
            <person name="Wye N."/>
            <person name="McPherson J."/>
            <person name="Zhao S."/>
            <person name="Fraser C.M."/>
            <person name="Shetty J."/>
            <person name="Shatsman S."/>
            <person name="Geer K."/>
            <person name="Chen Y."/>
            <person name="Abramzon S."/>
            <person name="Nierman W.C."/>
            <person name="Havlak P.H."/>
            <person name="Chen R."/>
            <person name="Durbin K.J."/>
            <person name="Egan A."/>
            <person name="Ren Y."/>
            <person name="Song X.-Z."/>
            <person name="Li B."/>
            <person name="Liu Y."/>
            <person name="Qin X."/>
            <person name="Cawley S."/>
            <person name="Cooney A.J."/>
            <person name="D'Souza L.M."/>
            <person name="Martin K."/>
            <person name="Wu J.Q."/>
            <person name="Gonzalez-Garay M.L."/>
            <person name="Jackson A.R."/>
            <person name="Kalafus K.J."/>
            <person name="McLeod M.P."/>
            <person name="Milosavljevic A."/>
            <person name="Virk D."/>
            <person name="Volkov A."/>
            <person name="Wheeler D.A."/>
            <person name="Zhang Z."/>
            <person name="Bailey J.A."/>
            <person name="Eichler E.E."/>
            <person name="Tuzun E."/>
            <person name="Birney E."/>
            <person name="Mongin E."/>
            <person name="Ureta-Vidal A."/>
            <person name="Woodwark C."/>
            <person name="Zdobnov E."/>
            <person name="Bork P."/>
            <person name="Suyama M."/>
            <person name="Torrents D."/>
            <person name="Alexandersson M."/>
            <person name="Trask B.J."/>
            <person name="Young J.M."/>
            <person name="Huang H."/>
            <person name="Wang H."/>
            <person name="Xing H."/>
            <person name="Daniels S."/>
            <person name="Gietzen D."/>
            <person name="Schmidt J."/>
            <person name="Stevens K."/>
            <person name="Vitt U."/>
            <person name="Wingrove J."/>
            <person name="Camara F."/>
            <person name="Mar Alba M."/>
            <person name="Abril J.F."/>
            <person name="Guigo R."/>
            <person name="Smit A."/>
            <person name="Dubchak I."/>
            <person name="Rubin E.M."/>
            <person name="Couronne O."/>
            <person name="Poliakov A."/>
            <person name="Huebner N."/>
            <person name="Ganten D."/>
            <person name="Goesele C."/>
            <person name="Hummel O."/>
            <person name="Kreitler T."/>
            <person name="Lee Y.-A."/>
            <person name="Monti J."/>
            <person name="Schulz H."/>
            <person name="Zimdahl H."/>
            <person name="Himmelbauer H."/>
            <person name="Lehrach H."/>
            <person name="Jacob H.J."/>
            <person name="Bromberg S."/>
            <person name="Gullings-Handley J."/>
            <person name="Jensen-Seaman M.I."/>
            <person name="Kwitek A.E."/>
            <person name="Lazar J."/>
            <person name="Pasko D."/>
            <person name="Tonellato P.J."/>
            <person name="Twigger S."/>
            <person name="Ponting C.P."/>
            <person name="Duarte J.M."/>
            <person name="Rice S."/>
            <person name="Goodstadt L."/>
            <person name="Beatson S.A."/>
            <person name="Emes R.D."/>
            <person name="Winter E.E."/>
            <person name="Webber C."/>
            <person name="Brandt P."/>
            <person name="Nyakatura G."/>
            <person name="Adetobi M."/>
            <person name="Chiaromonte F."/>
            <person name="Elnitski L."/>
            <person name="Eswara P."/>
            <person name="Hardison R.C."/>
            <person name="Hou M."/>
            <person name="Kolbe D."/>
            <person name="Makova K."/>
            <person name="Miller W."/>
            <person name="Nekrutenko A."/>
            <person name="Riemer C."/>
            <person name="Schwartz S."/>
            <person name="Taylor J."/>
            <person name="Yang S."/>
            <person name="Zhang Y."/>
            <person name="Lindpaintner K."/>
            <person name="Andrews T.D."/>
            <person name="Caccamo M."/>
            <person name="Clamp M."/>
            <person name="Clarke L."/>
            <person name="Curwen V."/>
            <person name="Durbin R.M."/>
            <person name="Eyras E."/>
            <person name="Searle S.M."/>
            <person name="Cooper G.M."/>
            <person name="Batzoglou S."/>
            <person name="Brudno M."/>
            <person name="Sidow A."/>
            <person name="Stone E.A."/>
            <person name="Payseur B.A."/>
            <person name="Bourque G."/>
            <person name="Lopez-Otin C."/>
            <person name="Puente X.S."/>
            <person name="Chakrabarti K."/>
            <person name="Chatterji S."/>
            <person name="Dewey C."/>
            <person name="Pachter L."/>
            <person name="Bray N."/>
            <person name="Yap V.B."/>
            <person name="Caspi A."/>
            <person name="Tesler G."/>
            <person name="Pevzner P.A."/>
            <person name="Haussler D."/>
            <person name="Roskin K.M."/>
            <person name="Baertsch R."/>
            <person name="Clawson H."/>
            <person name="Furey T.S."/>
            <person name="Hinrichs A.S."/>
            <person name="Karolchik D."/>
            <person name="Kent W.J."/>
            <person name="Rosenbloom K.R."/>
            <person name="Trumbower H."/>
            <person name="Weirauch M."/>
            <person name="Cooper D.N."/>
            <person name="Stenson P.D."/>
            <person name="Ma B."/>
            <person name="Brent M."/>
            <person name="Arumugam M."/>
            <person name="Shteynberg D."/>
            <person name="Copley R.R."/>
            <person name="Taylor M.S."/>
            <person name="Riethman H."/>
            <person name="Mudunuri U."/>
            <person name="Peterson J."/>
            <person name="Guyer M."/>
            <person name="Felsenfeld A."/>
            <person name="Old S."/>
            <person name="Mockrin S."/>
            <person name="Collins F.S."/>
        </authorList>
    </citation>
    <scope>NUCLEOTIDE SEQUENCE [LARGE SCALE GENOMIC DNA]</scope>
    <source>
        <strain>Brown Norway</strain>
    </source>
</reference>
<reference key="2">
    <citation type="submission" date="2005-07" db="EMBL/GenBank/DDBJ databases">
        <authorList>
            <person name="Mural R.J."/>
            <person name="Adams M.D."/>
            <person name="Myers E.W."/>
            <person name="Smith H.O."/>
            <person name="Venter J.C."/>
        </authorList>
    </citation>
    <scope>NUCLEOTIDE SEQUENCE [LARGE SCALE GENOMIC DNA]</scope>
    <source>
        <strain>Brown Norway</strain>
    </source>
</reference>
<accession>D3ZKV9</accession>
<organism>
    <name type="scientific">Rattus norvegicus</name>
    <name type="common">Rat</name>
    <dbReference type="NCBI Taxonomy" id="10116"/>
    <lineage>
        <taxon>Eukaryota</taxon>
        <taxon>Metazoa</taxon>
        <taxon>Chordata</taxon>
        <taxon>Craniata</taxon>
        <taxon>Vertebrata</taxon>
        <taxon>Euteleostomi</taxon>
        <taxon>Mammalia</taxon>
        <taxon>Eutheria</taxon>
        <taxon>Euarchontoglires</taxon>
        <taxon>Glires</taxon>
        <taxon>Rodentia</taxon>
        <taxon>Myomorpha</taxon>
        <taxon>Muroidea</taxon>
        <taxon>Muridae</taxon>
        <taxon>Murinae</taxon>
        <taxon>Rattus</taxon>
    </lineage>
</organism>
<evidence type="ECO:0000255" key="1">
    <source>
        <dbReference type="PROSITE-ProRule" id="PRU00134"/>
    </source>
</evidence>
<evidence type="ECO:0000256" key="2">
    <source>
        <dbReference type="SAM" id="MobiDB-lite"/>
    </source>
</evidence>
<evidence type="ECO:0000305" key="3"/>
<keyword id="KW-0479">Metal-binding</keyword>
<keyword id="KW-1185">Reference proteome</keyword>
<keyword id="KW-0862">Zinc</keyword>
<keyword id="KW-0863">Zinc-finger</keyword>
<name>MSS51_RAT</name>
<sequence>MAPRSRRRKHKKPPPVTPMPDIPPTDVSAVRPALPEPGPSIDALGFIALDSDVPGLPQRILQRLNMKSYEEYKLVIDGGTPVPSFGFRCQQEMFQRMEDTFRFCAYCKALPHGLSSCKVLRHCKRCRNVYYCDAECQRSDWPAHRKVCGELRLVAVDRVMEWLLVTGDFVLPSGPWPWLPEEIQNWDTWFSMRGLQLESTLNALLGSHAMTMLWASLGRPRPDPDVLHGSLKRLMTDVLSRPLTLGLGIRTLAIDVGKTGGSTLHVVGASHVETFLIRSGDYDELGYMFPENLGFRVIMVGVDVSADLLQSSSSLPLEPGTVQLSGHRALYHDFWEEQIETGNLAHPDLVAAFHPGFHASPGLMEAWLPTLLLLRDYEIPTLITVYSQQELEASLQVLVNLDTHIIACGANPFASLKPEQVYSKPNKQPVYSSAYYIVFRGCSSCQLDKQQVEEEPDEFSVVESNPN</sequence>
<dbReference type="EMBL" id="AABR03095207">
    <property type="status" value="NOT_ANNOTATED_CDS"/>
    <property type="molecule type" value="Genomic_DNA"/>
</dbReference>
<dbReference type="EMBL" id="CH474061">
    <property type="protein sequence ID" value="EDL86227.1"/>
    <property type="molecule type" value="Genomic_DNA"/>
</dbReference>
<dbReference type="RefSeq" id="NP_001099495.1">
    <property type="nucleotide sequence ID" value="NM_001106025.1"/>
</dbReference>
<dbReference type="RefSeq" id="XP_063130138.1">
    <property type="nucleotide sequence ID" value="XM_063274068.1"/>
</dbReference>
<dbReference type="FunCoup" id="D3ZKV9">
    <property type="interactions" value="6"/>
</dbReference>
<dbReference type="STRING" id="10116.ENSRNOP00000010179"/>
<dbReference type="PaxDb" id="10116-ENSRNOP00000010179"/>
<dbReference type="Ensembl" id="ENSRNOT00000010178.4">
    <property type="protein sequence ID" value="ENSRNOP00000010179.3"/>
    <property type="gene ID" value="ENSRNOG00000007632.4"/>
</dbReference>
<dbReference type="GeneID" id="289904"/>
<dbReference type="KEGG" id="rno:289904"/>
<dbReference type="UCSC" id="RGD:1309408">
    <property type="organism name" value="rat"/>
</dbReference>
<dbReference type="AGR" id="RGD:1309408"/>
<dbReference type="CTD" id="118490"/>
<dbReference type="RGD" id="1309408">
    <property type="gene designation" value="Mss51"/>
</dbReference>
<dbReference type="eggNOG" id="ENOG502QVEJ">
    <property type="taxonomic scope" value="Eukaryota"/>
</dbReference>
<dbReference type="GeneTree" id="ENSGT00940000153820"/>
<dbReference type="HOGENOM" id="CLU_047718_0_0_1"/>
<dbReference type="InParanoid" id="D3ZKV9"/>
<dbReference type="OMA" id="DELGHMF"/>
<dbReference type="OrthoDB" id="5282002at2759"/>
<dbReference type="PhylomeDB" id="D3ZKV9"/>
<dbReference type="TreeFam" id="TF330829"/>
<dbReference type="PRO" id="PR:D3ZKV9"/>
<dbReference type="Proteomes" id="UP000002494">
    <property type="component" value="Chromosome 15"/>
</dbReference>
<dbReference type="Proteomes" id="UP000234681">
    <property type="component" value="Chromosome 15"/>
</dbReference>
<dbReference type="Bgee" id="ENSRNOG00000007632">
    <property type="expression patterns" value="Expressed in skeletal muscle tissue and 19 other cell types or tissues"/>
</dbReference>
<dbReference type="GO" id="GO:0008270">
    <property type="term" value="F:zinc ion binding"/>
    <property type="evidence" value="ECO:0007669"/>
    <property type="project" value="UniProtKB-KW"/>
</dbReference>
<dbReference type="Gene3D" id="6.10.140.2220">
    <property type="match status" value="1"/>
</dbReference>
<dbReference type="InterPro" id="IPR052839">
    <property type="entry name" value="Mito_gene_expr_regulator"/>
</dbReference>
<dbReference type="InterPro" id="IPR046824">
    <property type="entry name" value="Mss51-like_C"/>
</dbReference>
<dbReference type="InterPro" id="IPR002893">
    <property type="entry name" value="Znf_MYND"/>
</dbReference>
<dbReference type="PANTHER" id="PTHR46920">
    <property type="match status" value="1"/>
</dbReference>
<dbReference type="PANTHER" id="PTHR46920:SF1">
    <property type="entry name" value="PROTEIN MSS51 HOMOLOG, MITOCHONDRIAL-RELATED"/>
    <property type="match status" value="1"/>
</dbReference>
<dbReference type="Pfam" id="PF20179">
    <property type="entry name" value="MSS51_C"/>
    <property type="match status" value="1"/>
</dbReference>
<dbReference type="Pfam" id="PF01753">
    <property type="entry name" value="zf-MYND"/>
    <property type="match status" value="1"/>
</dbReference>
<dbReference type="SUPFAM" id="SSF144232">
    <property type="entry name" value="HIT/MYND zinc finger-like"/>
    <property type="match status" value="1"/>
</dbReference>
<dbReference type="PROSITE" id="PS01360">
    <property type="entry name" value="ZF_MYND_1"/>
    <property type="match status" value="1"/>
</dbReference>
<dbReference type="PROSITE" id="PS50865">
    <property type="entry name" value="ZF_MYND_2"/>
    <property type="match status" value="1"/>
</dbReference>
<gene>
    <name type="primary">Mss51</name>
    <name type="synonym">Zmynd17</name>
</gene>
<proteinExistence type="predicted"/>
<feature type="chain" id="PRO_0000417968" description="Putative protein MSS51 homolog, mitochondrial">
    <location>
        <begin position="1"/>
        <end position="467"/>
    </location>
</feature>
<feature type="zinc finger region" description="MYND-type" evidence="1">
    <location>
        <begin position="104"/>
        <end position="148"/>
    </location>
</feature>
<feature type="region of interest" description="Disordered" evidence="2">
    <location>
        <begin position="1"/>
        <end position="34"/>
    </location>
</feature>
<feature type="compositionally biased region" description="Basic residues" evidence="2">
    <location>
        <begin position="1"/>
        <end position="13"/>
    </location>
</feature>
<feature type="compositionally biased region" description="Pro residues" evidence="2">
    <location>
        <begin position="14"/>
        <end position="23"/>
    </location>
</feature>
<feature type="binding site" evidence="1">
    <location>
        <position position="104"/>
    </location>
    <ligand>
        <name>Zn(2+)</name>
        <dbReference type="ChEBI" id="CHEBI:29105"/>
        <label>1</label>
    </ligand>
</feature>
<feature type="binding site" evidence="1">
    <location>
        <position position="107"/>
    </location>
    <ligand>
        <name>Zn(2+)</name>
        <dbReference type="ChEBI" id="CHEBI:29105"/>
        <label>1</label>
    </ligand>
</feature>
<feature type="binding site" evidence="1">
    <location>
        <position position="123"/>
    </location>
    <ligand>
        <name>Zn(2+)</name>
        <dbReference type="ChEBI" id="CHEBI:29105"/>
        <label>2</label>
    </ligand>
</feature>
<feature type="binding site" evidence="1">
    <location>
        <position position="126"/>
    </location>
    <ligand>
        <name>Zn(2+)</name>
        <dbReference type="ChEBI" id="CHEBI:29105"/>
        <label>2</label>
    </ligand>
</feature>
<feature type="binding site" evidence="1">
    <location>
        <position position="132"/>
    </location>
    <ligand>
        <name>Zn(2+)</name>
        <dbReference type="ChEBI" id="CHEBI:29105"/>
        <label>1</label>
    </ligand>
</feature>
<feature type="binding site" evidence="1">
    <location>
        <position position="136"/>
    </location>
    <ligand>
        <name>Zn(2+)</name>
        <dbReference type="ChEBI" id="CHEBI:29105"/>
        <label>1</label>
    </ligand>
</feature>
<feature type="binding site" evidence="1">
    <location>
        <position position="144"/>
    </location>
    <ligand>
        <name>Zn(2+)</name>
        <dbReference type="ChEBI" id="CHEBI:29105"/>
        <label>2</label>
    </ligand>
</feature>
<feature type="binding site" evidence="1">
    <location>
        <position position="148"/>
    </location>
    <ligand>
        <name>Zn(2+)</name>
        <dbReference type="ChEBI" id="CHEBI:29105"/>
        <label>2</label>
    </ligand>
</feature>